<evidence type="ECO:0000255" key="1">
    <source>
        <dbReference type="HAMAP-Rule" id="MF_00071"/>
    </source>
</evidence>
<keyword id="KW-1003">Cell membrane</keyword>
<keyword id="KW-0342">GTP-binding</keyword>
<keyword id="KW-0378">Hydrolase</keyword>
<keyword id="KW-0472">Membrane</keyword>
<keyword id="KW-0547">Nucleotide-binding</keyword>
<keyword id="KW-0648">Protein biosynthesis</keyword>
<feature type="chain" id="PRO_0000265676" description="Elongation factor 4">
    <location>
        <begin position="1"/>
        <end position="639"/>
    </location>
</feature>
<feature type="domain" description="tr-type G">
    <location>
        <begin position="39"/>
        <end position="220"/>
    </location>
</feature>
<feature type="binding site" evidence="1">
    <location>
        <begin position="51"/>
        <end position="56"/>
    </location>
    <ligand>
        <name>GTP</name>
        <dbReference type="ChEBI" id="CHEBI:37565"/>
    </ligand>
</feature>
<feature type="binding site" evidence="1">
    <location>
        <begin position="167"/>
        <end position="170"/>
    </location>
    <ligand>
        <name>GTP</name>
        <dbReference type="ChEBI" id="CHEBI:37565"/>
    </ligand>
</feature>
<sequence>MCRRAPRSIPLRCAHAPRRDVYQEIPISSFADQTFTAPAQIRNFCIIAHIDHGKSTLADRMLGITGVVADRDMRAQYLDRMDIERERGITIKAQNVRLPWEVNGEKFVLHLIDTPGHVDFTYEVSRALEACEGAILLVDAAQGIEAQTLANLYLALDRDLAIIPVLNKIDLPAADPDRYAGELAHIIGCEPSDVLRVSGKTGAGVRELLDEVVRLVPPPTGDADAPARAMIFDSVYDIYRGVVTYVRVVDGKITPRERIAMMSTGATHELLEVGIVSPDPKPSAGLGVGEVGYLITGVKDVRQSKVGDTVTTARHGAKEALTGYREPRPMVYSGLYPVDGSDYPVLREALDKLQLNDAALTYEPETSVALGFGFRCGFLGLLHMEITRERLEREFNLDLISTAPNVVYRVEKDDGTEIVVTNPSDWPEGKVRTVYEPVVKTTVIAPSEFIGTIMELCQSRRGELGGMDYLSPERVELRYTMPLGEIIFDFFDSLKSRTRGYASLDYEEAGEQEADLVKVDILLQGEAVDAFSAIVHKDGASAYGNKMTTKLKELIPRQQFEVPVQAAVGSRIIARENIRAIRKDVLSKCYGGDITRKRKLLEKQKEGKKRMKTIGRVDVPQEAFVAALSTDAAGDKPKK</sequence>
<protein>
    <recommendedName>
        <fullName evidence="1">Elongation factor 4</fullName>
        <shortName evidence="1">EF-4</shortName>
        <ecNumber evidence="1">3.6.5.n1</ecNumber>
    </recommendedName>
    <alternativeName>
        <fullName evidence="1">Ribosomal back-translocase LepA</fullName>
    </alternativeName>
</protein>
<dbReference type="EC" id="3.6.5.n1" evidence="1"/>
<dbReference type="EMBL" id="CP000384">
    <property type="protein sequence ID" value="ABG09600.1"/>
    <property type="molecule type" value="Genomic_DNA"/>
</dbReference>
<dbReference type="SMR" id="Q1B684"/>
<dbReference type="KEGG" id="mmc:Mmcs_3493"/>
<dbReference type="HOGENOM" id="CLU_009995_3_3_11"/>
<dbReference type="GO" id="GO:0005886">
    <property type="term" value="C:plasma membrane"/>
    <property type="evidence" value="ECO:0007669"/>
    <property type="project" value="UniProtKB-SubCell"/>
</dbReference>
<dbReference type="GO" id="GO:0005525">
    <property type="term" value="F:GTP binding"/>
    <property type="evidence" value="ECO:0007669"/>
    <property type="project" value="UniProtKB-UniRule"/>
</dbReference>
<dbReference type="GO" id="GO:0003924">
    <property type="term" value="F:GTPase activity"/>
    <property type="evidence" value="ECO:0007669"/>
    <property type="project" value="UniProtKB-UniRule"/>
</dbReference>
<dbReference type="GO" id="GO:0043022">
    <property type="term" value="F:ribosome binding"/>
    <property type="evidence" value="ECO:0007669"/>
    <property type="project" value="UniProtKB-UniRule"/>
</dbReference>
<dbReference type="GO" id="GO:0003746">
    <property type="term" value="F:translation elongation factor activity"/>
    <property type="evidence" value="ECO:0007669"/>
    <property type="project" value="UniProtKB-UniRule"/>
</dbReference>
<dbReference type="GO" id="GO:0045727">
    <property type="term" value="P:positive regulation of translation"/>
    <property type="evidence" value="ECO:0007669"/>
    <property type="project" value="UniProtKB-UniRule"/>
</dbReference>
<dbReference type="CDD" id="cd03699">
    <property type="entry name" value="EF4_II"/>
    <property type="match status" value="1"/>
</dbReference>
<dbReference type="CDD" id="cd16260">
    <property type="entry name" value="EF4_III"/>
    <property type="match status" value="1"/>
</dbReference>
<dbReference type="CDD" id="cd01890">
    <property type="entry name" value="LepA"/>
    <property type="match status" value="1"/>
</dbReference>
<dbReference type="CDD" id="cd03709">
    <property type="entry name" value="lepA_C"/>
    <property type="match status" value="1"/>
</dbReference>
<dbReference type="FunFam" id="3.30.70.240:FF:000011">
    <property type="entry name" value="Elongation factor 4"/>
    <property type="match status" value="1"/>
</dbReference>
<dbReference type="FunFam" id="3.40.50.300:FF:000078">
    <property type="entry name" value="Elongation factor 4"/>
    <property type="match status" value="1"/>
</dbReference>
<dbReference type="FunFam" id="2.40.30.10:FF:000015">
    <property type="entry name" value="Translation factor GUF1, mitochondrial"/>
    <property type="match status" value="1"/>
</dbReference>
<dbReference type="FunFam" id="3.30.70.2570:FF:000001">
    <property type="entry name" value="Translation factor GUF1, mitochondrial"/>
    <property type="match status" value="1"/>
</dbReference>
<dbReference type="FunFam" id="3.30.70.870:FF:000004">
    <property type="entry name" value="Translation factor GUF1, mitochondrial"/>
    <property type="match status" value="1"/>
</dbReference>
<dbReference type="Gene3D" id="3.30.70.240">
    <property type="match status" value="1"/>
</dbReference>
<dbReference type="Gene3D" id="3.30.70.2570">
    <property type="entry name" value="Elongation factor 4, C-terminal domain"/>
    <property type="match status" value="1"/>
</dbReference>
<dbReference type="Gene3D" id="3.30.70.870">
    <property type="entry name" value="Elongation Factor G (Translational Gtpase), domain 3"/>
    <property type="match status" value="1"/>
</dbReference>
<dbReference type="Gene3D" id="3.40.50.300">
    <property type="entry name" value="P-loop containing nucleotide triphosphate hydrolases"/>
    <property type="match status" value="1"/>
</dbReference>
<dbReference type="Gene3D" id="2.40.30.10">
    <property type="entry name" value="Translation factors"/>
    <property type="match status" value="1"/>
</dbReference>
<dbReference type="HAMAP" id="MF_00071">
    <property type="entry name" value="LepA"/>
    <property type="match status" value="1"/>
</dbReference>
<dbReference type="InterPro" id="IPR006297">
    <property type="entry name" value="EF-4"/>
</dbReference>
<dbReference type="InterPro" id="IPR035647">
    <property type="entry name" value="EFG_III/V"/>
</dbReference>
<dbReference type="InterPro" id="IPR000640">
    <property type="entry name" value="EFG_V-like"/>
</dbReference>
<dbReference type="InterPro" id="IPR004161">
    <property type="entry name" value="EFTu-like_2"/>
</dbReference>
<dbReference type="InterPro" id="IPR031157">
    <property type="entry name" value="G_TR_CS"/>
</dbReference>
<dbReference type="InterPro" id="IPR038363">
    <property type="entry name" value="LepA_C_sf"/>
</dbReference>
<dbReference type="InterPro" id="IPR013842">
    <property type="entry name" value="LepA_CTD"/>
</dbReference>
<dbReference type="InterPro" id="IPR035654">
    <property type="entry name" value="LepA_IV"/>
</dbReference>
<dbReference type="InterPro" id="IPR027417">
    <property type="entry name" value="P-loop_NTPase"/>
</dbReference>
<dbReference type="InterPro" id="IPR005225">
    <property type="entry name" value="Small_GTP-bd"/>
</dbReference>
<dbReference type="InterPro" id="IPR000795">
    <property type="entry name" value="T_Tr_GTP-bd_dom"/>
</dbReference>
<dbReference type="InterPro" id="IPR009000">
    <property type="entry name" value="Transl_B-barrel_sf"/>
</dbReference>
<dbReference type="NCBIfam" id="TIGR01393">
    <property type="entry name" value="lepA"/>
    <property type="match status" value="1"/>
</dbReference>
<dbReference type="NCBIfam" id="TIGR00231">
    <property type="entry name" value="small_GTP"/>
    <property type="match status" value="1"/>
</dbReference>
<dbReference type="PANTHER" id="PTHR43512:SF4">
    <property type="entry name" value="TRANSLATION FACTOR GUF1 HOMOLOG, CHLOROPLASTIC"/>
    <property type="match status" value="1"/>
</dbReference>
<dbReference type="PANTHER" id="PTHR43512">
    <property type="entry name" value="TRANSLATION FACTOR GUF1-RELATED"/>
    <property type="match status" value="1"/>
</dbReference>
<dbReference type="Pfam" id="PF00679">
    <property type="entry name" value="EFG_C"/>
    <property type="match status" value="1"/>
</dbReference>
<dbReference type="Pfam" id="PF00009">
    <property type="entry name" value="GTP_EFTU"/>
    <property type="match status" value="1"/>
</dbReference>
<dbReference type="Pfam" id="PF03144">
    <property type="entry name" value="GTP_EFTU_D2"/>
    <property type="match status" value="1"/>
</dbReference>
<dbReference type="Pfam" id="PF06421">
    <property type="entry name" value="LepA_C"/>
    <property type="match status" value="1"/>
</dbReference>
<dbReference type="PRINTS" id="PR00315">
    <property type="entry name" value="ELONGATNFCT"/>
</dbReference>
<dbReference type="SMART" id="SM00838">
    <property type="entry name" value="EFG_C"/>
    <property type="match status" value="1"/>
</dbReference>
<dbReference type="SUPFAM" id="SSF54980">
    <property type="entry name" value="EF-G C-terminal domain-like"/>
    <property type="match status" value="2"/>
</dbReference>
<dbReference type="SUPFAM" id="SSF52540">
    <property type="entry name" value="P-loop containing nucleoside triphosphate hydrolases"/>
    <property type="match status" value="1"/>
</dbReference>
<dbReference type="SUPFAM" id="SSF50447">
    <property type="entry name" value="Translation proteins"/>
    <property type="match status" value="1"/>
</dbReference>
<dbReference type="PROSITE" id="PS00301">
    <property type="entry name" value="G_TR_1"/>
    <property type="match status" value="1"/>
</dbReference>
<dbReference type="PROSITE" id="PS51722">
    <property type="entry name" value="G_TR_2"/>
    <property type="match status" value="1"/>
</dbReference>
<organism>
    <name type="scientific">Mycobacterium sp. (strain MCS)</name>
    <dbReference type="NCBI Taxonomy" id="164756"/>
    <lineage>
        <taxon>Bacteria</taxon>
        <taxon>Bacillati</taxon>
        <taxon>Actinomycetota</taxon>
        <taxon>Actinomycetes</taxon>
        <taxon>Mycobacteriales</taxon>
        <taxon>Mycobacteriaceae</taxon>
        <taxon>Mycobacterium</taxon>
    </lineage>
</organism>
<comment type="function">
    <text evidence="1">Required for accurate and efficient protein synthesis under certain stress conditions. May act as a fidelity factor of the translation reaction, by catalyzing a one-codon backward translocation of tRNAs on improperly translocated ribosomes. Back-translocation proceeds from a post-translocation (POST) complex to a pre-translocation (PRE) complex, thus giving elongation factor G a second chance to translocate the tRNAs correctly. Binds to ribosomes in a GTP-dependent manner.</text>
</comment>
<comment type="catalytic activity">
    <reaction evidence="1">
        <text>GTP + H2O = GDP + phosphate + H(+)</text>
        <dbReference type="Rhea" id="RHEA:19669"/>
        <dbReference type="ChEBI" id="CHEBI:15377"/>
        <dbReference type="ChEBI" id="CHEBI:15378"/>
        <dbReference type="ChEBI" id="CHEBI:37565"/>
        <dbReference type="ChEBI" id="CHEBI:43474"/>
        <dbReference type="ChEBI" id="CHEBI:58189"/>
        <dbReference type="EC" id="3.6.5.n1"/>
    </reaction>
</comment>
<comment type="subcellular location">
    <subcellularLocation>
        <location evidence="1">Cell membrane</location>
        <topology evidence="1">Peripheral membrane protein</topology>
        <orientation evidence="1">Cytoplasmic side</orientation>
    </subcellularLocation>
</comment>
<comment type="similarity">
    <text evidence="1">Belongs to the TRAFAC class translation factor GTPase superfamily. Classic translation factor GTPase family. LepA subfamily.</text>
</comment>
<name>LEPA_MYCSS</name>
<accession>Q1B684</accession>
<proteinExistence type="inferred from homology"/>
<gene>
    <name evidence="1" type="primary">lepA</name>
    <name type="ordered locus">Mmcs_3493</name>
</gene>
<reference key="1">
    <citation type="submission" date="2006-06" db="EMBL/GenBank/DDBJ databases">
        <title>Complete sequence of chromosome of Mycobacterium sp. MCS.</title>
        <authorList>
            <consortium name="US DOE Joint Genome Institute"/>
            <person name="Copeland A."/>
            <person name="Lucas S."/>
            <person name="Lapidus A."/>
            <person name="Barry K."/>
            <person name="Detter J.C."/>
            <person name="Glavina del Rio T."/>
            <person name="Hammon N."/>
            <person name="Israni S."/>
            <person name="Dalin E."/>
            <person name="Tice H."/>
            <person name="Pitluck S."/>
            <person name="Martinez M."/>
            <person name="Schmutz J."/>
            <person name="Larimer F."/>
            <person name="Land M."/>
            <person name="Hauser L."/>
            <person name="Kyrpides N."/>
            <person name="Kim E."/>
            <person name="Miller C.D."/>
            <person name="Hughes J.E."/>
            <person name="Anderson A.J."/>
            <person name="Sims R.C."/>
            <person name="Richardson P."/>
        </authorList>
    </citation>
    <scope>NUCLEOTIDE SEQUENCE [LARGE SCALE GENOMIC DNA]</scope>
    <source>
        <strain>MCS</strain>
    </source>
</reference>